<gene>
    <name type="primary">SUCS</name>
</gene>
<organism>
    <name type="scientific">Vicia faba</name>
    <name type="common">Broad bean</name>
    <name type="synonym">Faba vulgaris</name>
    <dbReference type="NCBI Taxonomy" id="3906"/>
    <lineage>
        <taxon>Eukaryota</taxon>
        <taxon>Viridiplantae</taxon>
        <taxon>Streptophyta</taxon>
        <taxon>Embryophyta</taxon>
        <taxon>Tracheophyta</taxon>
        <taxon>Spermatophyta</taxon>
        <taxon>Magnoliopsida</taxon>
        <taxon>eudicotyledons</taxon>
        <taxon>Gunneridae</taxon>
        <taxon>Pentapetalae</taxon>
        <taxon>rosids</taxon>
        <taxon>fabids</taxon>
        <taxon>Fabales</taxon>
        <taxon>Fabaceae</taxon>
        <taxon>Papilionoideae</taxon>
        <taxon>50 kb inversion clade</taxon>
        <taxon>NPAAA clade</taxon>
        <taxon>Hologalegina</taxon>
        <taxon>IRL clade</taxon>
        <taxon>Fabeae</taxon>
        <taxon>Vicia</taxon>
    </lineage>
</organism>
<comment type="function">
    <text>Sucrose-cleaving enzyme that provides UDP-glucose and fructose for various metabolic pathways.</text>
</comment>
<comment type="catalytic activity">
    <reaction>
        <text>an NDP-alpha-D-glucose + D-fructose = a ribonucleoside 5'-diphosphate + sucrose + H(+)</text>
        <dbReference type="Rhea" id="RHEA:16241"/>
        <dbReference type="ChEBI" id="CHEBI:15378"/>
        <dbReference type="ChEBI" id="CHEBI:17992"/>
        <dbReference type="ChEBI" id="CHEBI:37721"/>
        <dbReference type="ChEBI" id="CHEBI:57930"/>
        <dbReference type="ChEBI" id="CHEBI:76533"/>
        <dbReference type="EC" id="2.4.1.13"/>
    </reaction>
</comment>
<comment type="similarity">
    <text evidence="2">Belongs to the glycosyltransferase 1 family. Plant sucrose synthase subfamily.</text>
</comment>
<protein>
    <recommendedName>
        <fullName>Sucrose synthase</fullName>
        <ecNumber>2.4.1.13</ecNumber>
    </recommendedName>
    <alternativeName>
        <fullName>Sucrose-UDP glucosyltransferase</fullName>
    </alternativeName>
</protein>
<sequence>MATERLTRVHSLRERLDETLTANRNEILALLSRIEAKGKGILQHHQVIAEFEEIPEENRQKLTDGAFGEVLRSTQEAIVLPPWVALAVRPRPGVWEYLRVNVHALVVENLQPAEFLKFKEELVDGSANGNFVLELDFEPFTASFPRPTLNKSIGNGVQFLNRHLSAKLFHDKESLHPLLEFLRLHSYKGKTLMLNDRIQNPDSLQHVLRKAEEYLSTVDPETPYSEFEHRFQEIGLERGWGDSAERVLESIQLLLDLLEAPDPCTLETFLDRIPMVFNVVILSPHGYFAQDDVLGYPDTGGQVVYILDQVRALESEMLNRIKKQGLDIVPRILIITRLLPDAVGTTCGQRLEKVYGTEHCHILRVPFRDQKGIVRKWISRFEVWPYLETYTEDVAHELAKELQGKPDLIVGNYSDGNIVASLLAHKLGVTQCTIAHALEKTKYPESDIYWKKFEEKYHFSCQFTADLFAMNHTDFIITSTFQEIAGSKDTVGQYESHTAFTLPGLYRVVHGIDVFDPKFNIVSPGADQTIYFPYTETSRRLTSFYPEIEELLYSTVENEEHICVLKDRSKPIIFTMARLDRVKNITGLVEWYGKNAKLRELVNLVVVAGDRRKESKDLEEKAEMKKMYELIETYKLNGQFRWISSQMNRVRNGELYRVICDTKGAFVQPAVYEAFGLTVVEAMATGLPTFATLNGGPAEIIVHGKSGFHIDPYHGDRAADLLVEFFEKVKADPSHWDKISLGGLQRIEEKYTWQIYSQRLLTLTGVYGFWKHVSNLDRLESRRYLEMFYALKYRKLAESVPLAVEE</sequence>
<keyword id="KW-0328">Glycosyltransferase</keyword>
<keyword id="KW-0808">Transferase</keyword>
<name>SUS_VICFA</name>
<evidence type="ECO:0000250" key="1">
    <source>
        <dbReference type="UniProtKB" id="P49040"/>
    </source>
</evidence>
<evidence type="ECO:0000305" key="2"/>
<accession>P31926</accession>
<dbReference type="EC" id="2.4.1.13"/>
<dbReference type="EMBL" id="X69773">
    <property type="protein sequence ID" value="CAA49428.1"/>
    <property type="molecule type" value="mRNA"/>
</dbReference>
<dbReference type="EMBL" id="M97551">
    <property type="protein sequence ID" value="AAC37346.1"/>
    <property type="molecule type" value="mRNA"/>
</dbReference>
<dbReference type="PIR" id="S31479">
    <property type="entry name" value="S31479"/>
</dbReference>
<dbReference type="SMR" id="P31926"/>
<dbReference type="EnsemblPlants" id="Vfaba.Hedin2.R1.4g205320.1">
    <property type="protein sequence ID" value="cds:Vfaba.Hedin2.R1.4g205320.1"/>
    <property type="gene ID" value="Vfaba.Hedin2.R1.4g205320"/>
</dbReference>
<dbReference type="Gramene" id="Vfaba.Hedin2.R1.4g205320.1">
    <property type="protein sequence ID" value="cds:Vfaba.Hedin2.R1.4g205320.1"/>
    <property type="gene ID" value="Vfaba.Hedin2.R1.4g205320"/>
</dbReference>
<dbReference type="OrthoDB" id="937291at2759"/>
<dbReference type="BRENDA" id="2.4.1.13">
    <property type="organism ID" value="986"/>
</dbReference>
<dbReference type="GO" id="GO:0016157">
    <property type="term" value="F:sucrose synthase activity"/>
    <property type="evidence" value="ECO:0007669"/>
    <property type="project" value="UniProtKB-EC"/>
</dbReference>
<dbReference type="GO" id="GO:0005985">
    <property type="term" value="P:sucrose metabolic process"/>
    <property type="evidence" value="ECO:0007669"/>
    <property type="project" value="InterPro"/>
</dbReference>
<dbReference type="FunFam" id="1.20.120.1230:FF:000001">
    <property type="entry name" value="Sucrose synthase"/>
    <property type="match status" value="1"/>
</dbReference>
<dbReference type="FunFam" id="3.10.450.330:FF:000001">
    <property type="entry name" value="Sucrose synthase"/>
    <property type="match status" value="1"/>
</dbReference>
<dbReference type="FunFam" id="3.40.50.2000:FF:000004">
    <property type="entry name" value="Sucrose synthase"/>
    <property type="match status" value="1"/>
</dbReference>
<dbReference type="Gene3D" id="1.20.120.1230">
    <property type="match status" value="1"/>
</dbReference>
<dbReference type="Gene3D" id="3.10.450.330">
    <property type="match status" value="1"/>
</dbReference>
<dbReference type="Gene3D" id="3.40.50.2000">
    <property type="entry name" value="Glycogen Phosphorylase B"/>
    <property type="match status" value="2"/>
</dbReference>
<dbReference type="InterPro" id="IPR001296">
    <property type="entry name" value="Glyco_trans_1"/>
</dbReference>
<dbReference type="InterPro" id="IPR000368">
    <property type="entry name" value="Sucrose_synth_GT-B1"/>
</dbReference>
<dbReference type="InterPro" id="IPR012820">
    <property type="entry name" value="Sucrose_synthase_pln/cyn"/>
</dbReference>
<dbReference type="InterPro" id="IPR056736">
    <property type="entry name" value="SUS_EPBD"/>
</dbReference>
<dbReference type="InterPro" id="IPR056735">
    <property type="entry name" value="SUS_N"/>
</dbReference>
<dbReference type="NCBIfam" id="TIGR02470">
    <property type="entry name" value="sucr_synth"/>
    <property type="match status" value="1"/>
</dbReference>
<dbReference type="PANTHER" id="PTHR45839">
    <property type="match status" value="1"/>
</dbReference>
<dbReference type="PANTHER" id="PTHR45839:SF31">
    <property type="entry name" value="SUCROSE SYNTHASE"/>
    <property type="match status" value="1"/>
</dbReference>
<dbReference type="Pfam" id="PF00534">
    <property type="entry name" value="Glycos_transf_1"/>
    <property type="match status" value="1"/>
</dbReference>
<dbReference type="Pfam" id="PF00862">
    <property type="entry name" value="GT-B_Sucrose_synth"/>
    <property type="match status" value="1"/>
</dbReference>
<dbReference type="Pfam" id="PF24862">
    <property type="entry name" value="SUS_EPBD"/>
    <property type="match status" value="1"/>
</dbReference>
<dbReference type="Pfam" id="PF24861">
    <property type="entry name" value="SUS_N"/>
    <property type="match status" value="1"/>
</dbReference>
<dbReference type="SUPFAM" id="SSF53756">
    <property type="entry name" value="UDP-Glycosyltransferase/glycogen phosphorylase"/>
    <property type="match status" value="1"/>
</dbReference>
<reference key="1">
    <citation type="journal article" date="1993" name="Planta">
        <title>A sucrose-synthase gene of Vicia faba L.: expression pattern in developing seeds in relation to starch synthesis and metabolic regulation.</title>
        <authorList>
            <person name="Heim U."/>
            <person name="Weber H."/>
            <person name="Baumlein H."/>
            <person name="Wobus U."/>
        </authorList>
    </citation>
    <scope>NUCLEOTIDE SEQUENCE [MRNA]</scope>
    <source>
        <strain>cv. Fribo</strain>
    </source>
</reference>
<reference key="2">
    <citation type="journal article" date="1993" name="Mol. Plant Microbe Interact.">
        <title>The sucrose synthase gene is predominantly expressed in the root nodule tissue of Vicia faba.</title>
        <authorList>
            <person name="Kuster H."/>
            <person name="Fruhling M."/>
            <person name="Perlick A.M."/>
            <person name="Puehler A."/>
        </authorList>
    </citation>
    <scope>NUCLEOTIDE SEQUENCE [MRNA]</scope>
    <source>
        <strain>cv. Kleine Thueringer</strain>
        <tissue>Root nodule</tissue>
    </source>
</reference>
<feature type="chain" id="PRO_0000204666" description="Sucrose synthase">
    <location>
        <begin position="1"/>
        <end position="806"/>
    </location>
</feature>
<feature type="region of interest" description="GT-B glycosyltransferase" evidence="1">
    <location>
        <begin position="275"/>
        <end position="752"/>
    </location>
</feature>
<proteinExistence type="evidence at transcript level"/>